<protein>
    <recommendedName>
        <fullName>Somatotropin</fullName>
    </recommendedName>
    <alternativeName>
        <fullName>Growth hormone</fullName>
    </alternativeName>
</protein>
<comment type="function">
    <text>Growth hormone plays an important role in growth control and is involved in the regulation of several anabolic processes. Implicated as an osmoregulatory substance important for seawater adaptation.</text>
</comment>
<comment type="subcellular location">
    <subcellularLocation>
        <location>Secreted</location>
    </subcellularLocation>
</comment>
<comment type="similarity">
    <text evidence="2">Belongs to the somatotropin/prolactin family.</text>
</comment>
<feature type="signal peptide" evidence="1">
    <location>
        <begin position="1"/>
        <end position="17"/>
    </location>
</feature>
<feature type="chain" id="PRO_0000033032" description="Somatotropin">
    <location>
        <begin position="18"/>
        <end position="204"/>
    </location>
</feature>
<feature type="binding site" evidence="1">
    <location>
        <position position="35"/>
    </location>
    <ligand>
        <name>Zn(2+)</name>
        <dbReference type="ChEBI" id="CHEBI:29105"/>
    </ligand>
</feature>
<feature type="binding site" evidence="1">
    <location>
        <position position="186"/>
    </location>
    <ligand>
        <name>Zn(2+)</name>
        <dbReference type="ChEBI" id="CHEBI:29105"/>
    </ligand>
</feature>
<feature type="modified residue" description="Pyrrolidone carboxylic acid" evidence="1">
    <location>
        <position position="18"/>
    </location>
</feature>
<feature type="disulfide bond" evidence="1">
    <location>
        <begin position="69"/>
        <end position="177"/>
    </location>
</feature>
<feature type="disulfide bond" evidence="1">
    <location>
        <begin position="194"/>
        <end position="202"/>
    </location>
</feature>
<organism>
    <name type="scientific">Morone saxatilis</name>
    <name type="common">Striped bass</name>
    <name type="synonym">Perca saxatilis</name>
    <dbReference type="NCBI Taxonomy" id="34816"/>
    <lineage>
        <taxon>Eukaryota</taxon>
        <taxon>Metazoa</taxon>
        <taxon>Chordata</taxon>
        <taxon>Craniata</taxon>
        <taxon>Vertebrata</taxon>
        <taxon>Euteleostomi</taxon>
        <taxon>Actinopterygii</taxon>
        <taxon>Neopterygii</taxon>
        <taxon>Teleostei</taxon>
        <taxon>Neoteleostei</taxon>
        <taxon>Acanthomorphata</taxon>
        <taxon>Eupercaria</taxon>
        <taxon>Moronidae</taxon>
        <taxon>Morone</taxon>
    </lineage>
</organism>
<sequence length="204" mass="23045">MDRAVLLLSVLSLGVSSQPITEGQRLFSIAVERVHNLHLLAQRLFTEFESSLQTEEQRQLNKIFLQDFCNSDYIISPIDKHETQRSSVLKLLSISYRLIESWEFPSRSLSVGPAARNQISPKLSELKTGILLLIGANQDGAEMFPDSSTLQLAPYGNYYQSLGADESLRRTYELLACFKKDMHKVETYLTVAKCRLSPEANCTL</sequence>
<keyword id="KW-1015">Disulfide bond</keyword>
<keyword id="KW-0372">Hormone</keyword>
<keyword id="KW-0479">Metal-binding</keyword>
<keyword id="KW-0873">Pyrrolidone carboxylic acid</keyword>
<keyword id="KW-0964">Secreted</keyword>
<keyword id="KW-0732">Signal</keyword>
<keyword id="KW-0862">Zinc</keyword>
<evidence type="ECO:0000250" key="1"/>
<evidence type="ECO:0000305" key="2"/>
<name>SOMA_MORSA</name>
<dbReference type="EMBL" id="S78253">
    <property type="protein sequence ID" value="AAB34389.1"/>
    <property type="molecule type" value="mRNA"/>
</dbReference>
<dbReference type="PIR" id="I51289">
    <property type="entry name" value="I51289"/>
</dbReference>
<dbReference type="SMR" id="P48248"/>
<dbReference type="GO" id="GO:0005615">
    <property type="term" value="C:extracellular space"/>
    <property type="evidence" value="ECO:0007669"/>
    <property type="project" value="InterPro"/>
</dbReference>
<dbReference type="GO" id="GO:0070186">
    <property type="term" value="F:growth hormone activity"/>
    <property type="evidence" value="ECO:0007669"/>
    <property type="project" value="TreeGrafter"/>
</dbReference>
<dbReference type="GO" id="GO:0005131">
    <property type="term" value="F:growth hormone receptor binding"/>
    <property type="evidence" value="ECO:0007669"/>
    <property type="project" value="InterPro"/>
</dbReference>
<dbReference type="GO" id="GO:0046872">
    <property type="term" value="F:metal ion binding"/>
    <property type="evidence" value="ECO:0007669"/>
    <property type="project" value="UniProtKB-KW"/>
</dbReference>
<dbReference type="GO" id="GO:0048513">
    <property type="term" value="P:animal organ development"/>
    <property type="evidence" value="ECO:0007669"/>
    <property type="project" value="TreeGrafter"/>
</dbReference>
<dbReference type="GO" id="GO:0060396">
    <property type="term" value="P:growth hormone receptor signaling pathway"/>
    <property type="evidence" value="ECO:0007669"/>
    <property type="project" value="TreeGrafter"/>
</dbReference>
<dbReference type="GO" id="GO:0045927">
    <property type="term" value="P:positive regulation of growth"/>
    <property type="evidence" value="ECO:0007669"/>
    <property type="project" value="TreeGrafter"/>
</dbReference>
<dbReference type="GO" id="GO:0046427">
    <property type="term" value="P:positive regulation of receptor signaling pathway via JAK-STAT"/>
    <property type="evidence" value="ECO:0007669"/>
    <property type="project" value="TreeGrafter"/>
</dbReference>
<dbReference type="GO" id="GO:0031667">
    <property type="term" value="P:response to nutrient levels"/>
    <property type="evidence" value="ECO:0007669"/>
    <property type="project" value="TreeGrafter"/>
</dbReference>
<dbReference type="CDD" id="cd10285">
    <property type="entry name" value="somatotropin_like"/>
    <property type="match status" value="1"/>
</dbReference>
<dbReference type="FunFam" id="1.20.1250.10:FF:000009">
    <property type="entry name" value="Growth hormone"/>
    <property type="match status" value="1"/>
</dbReference>
<dbReference type="Gene3D" id="1.20.1250.10">
    <property type="match status" value="1"/>
</dbReference>
<dbReference type="InterPro" id="IPR009079">
    <property type="entry name" value="4_helix_cytokine-like_core"/>
</dbReference>
<dbReference type="InterPro" id="IPR034975">
    <property type="entry name" value="Somatotropin"/>
</dbReference>
<dbReference type="InterPro" id="IPR001400">
    <property type="entry name" value="Somatotropin/Prolactin"/>
</dbReference>
<dbReference type="InterPro" id="IPR018116">
    <property type="entry name" value="Somatotropin_CS"/>
</dbReference>
<dbReference type="PANTHER" id="PTHR11417:SF2">
    <property type="entry name" value="SOMATOTROPIN"/>
    <property type="match status" value="1"/>
</dbReference>
<dbReference type="PANTHER" id="PTHR11417">
    <property type="entry name" value="SOMATOTROPIN,PROLACTIN"/>
    <property type="match status" value="1"/>
</dbReference>
<dbReference type="Pfam" id="PF00103">
    <property type="entry name" value="Hormone_1"/>
    <property type="match status" value="1"/>
</dbReference>
<dbReference type="PRINTS" id="PR00836">
    <property type="entry name" value="SOMATOTROPIN"/>
</dbReference>
<dbReference type="SUPFAM" id="SSF47266">
    <property type="entry name" value="4-helical cytokines"/>
    <property type="match status" value="1"/>
</dbReference>
<dbReference type="PROSITE" id="PS00266">
    <property type="entry name" value="SOMATOTROPIN_1"/>
    <property type="match status" value="1"/>
</dbReference>
<dbReference type="PROSITE" id="PS00338">
    <property type="entry name" value="SOMATOTROPIN_2"/>
    <property type="match status" value="1"/>
</dbReference>
<gene>
    <name type="primary">gh</name>
</gene>
<proteinExistence type="evidence at transcript level"/>
<accession>P48248</accession>
<reference key="1">
    <citation type="journal article" date="1995" name="Mol. Cell. Endocrinol.">
        <title>Production of a biologically active recombinant teleostean growth hormone in E. coli cells.</title>
        <authorList>
            <person name="Cheng C.M."/>
            <person name="Lin C.M."/>
            <person name="Shamblott M."/>
            <person name="Gonzalez-Villasenor L.I."/>
            <person name="Powers D.A."/>
            <person name="Woods C."/>
            <person name="Chen T.T."/>
        </authorList>
    </citation>
    <scope>NUCLEOTIDE SEQUENCE [MRNA]</scope>
    <source>
        <tissue>Pituitary</tissue>
    </source>
</reference>